<gene>
    <name evidence="1" type="primary">bioB</name>
    <name type="ordered locus">VF_A1189</name>
</gene>
<dbReference type="EC" id="2.8.1.6" evidence="1"/>
<dbReference type="EMBL" id="CP000021">
    <property type="protein sequence ID" value="ACB55715.1"/>
    <property type="molecule type" value="Genomic_DNA"/>
</dbReference>
<dbReference type="RefSeq" id="WP_011263575.1">
    <property type="nucleotide sequence ID" value="NZ_CAWLES010000002.1"/>
</dbReference>
<dbReference type="RefSeq" id="YP_001816747.1">
    <property type="nucleotide sequence ID" value="NC_006841.2"/>
</dbReference>
<dbReference type="SMR" id="B1WN69"/>
<dbReference type="STRING" id="312309.VF_A1189"/>
<dbReference type="EnsemblBacteria" id="ACB55715">
    <property type="protein sequence ID" value="ACB55715"/>
    <property type="gene ID" value="VF_A1189"/>
</dbReference>
<dbReference type="GeneID" id="54166067"/>
<dbReference type="KEGG" id="vfi:VF_A1189"/>
<dbReference type="PATRIC" id="fig|312309.11.peg.3349"/>
<dbReference type="eggNOG" id="COG0502">
    <property type="taxonomic scope" value="Bacteria"/>
</dbReference>
<dbReference type="HOGENOM" id="CLU_033172_1_2_6"/>
<dbReference type="OrthoDB" id="9786826at2"/>
<dbReference type="UniPathway" id="UPA00078">
    <property type="reaction ID" value="UER00162"/>
</dbReference>
<dbReference type="Proteomes" id="UP000000537">
    <property type="component" value="Chromosome II"/>
</dbReference>
<dbReference type="GO" id="GO:0051537">
    <property type="term" value="F:2 iron, 2 sulfur cluster binding"/>
    <property type="evidence" value="ECO:0007669"/>
    <property type="project" value="UniProtKB-KW"/>
</dbReference>
<dbReference type="GO" id="GO:0051539">
    <property type="term" value="F:4 iron, 4 sulfur cluster binding"/>
    <property type="evidence" value="ECO:0007669"/>
    <property type="project" value="UniProtKB-KW"/>
</dbReference>
<dbReference type="GO" id="GO:0004076">
    <property type="term" value="F:biotin synthase activity"/>
    <property type="evidence" value="ECO:0007669"/>
    <property type="project" value="UniProtKB-UniRule"/>
</dbReference>
<dbReference type="GO" id="GO:0005506">
    <property type="term" value="F:iron ion binding"/>
    <property type="evidence" value="ECO:0007669"/>
    <property type="project" value="UniProtKB-UniRule"/>
</dbReference>
<dbReference type="GO" id="GO:0009102">
    <property type="term" value="P:biotin biosynthetic process"/>
    <property type="evidence" value="ECO:0007669"/>
    <property type="project" value="UniProtKB-UniRule"/>
</dbReference>
<dbReference type="CDD" id="cd01335">
    <property type="entry name" value="Radical_SAM"/>
    <property type="match status" value="1"/>
</dbReference>
<dbReference type="FunFam" id="3.20.20.70:FF:000011">
    <property type="entry name" value="Biotin synthase"/>
    <property type="match status" value="1"/>
</dbReference>
<dbReference type="Gene3D" id="3.20.20.70">
    <property type="entry name" value="Aldolase class I"/>
    <property type="match status" value="1"/>
</dbReference>
<dbReference type="HAMAP" id="MF_01694">
    <property type="entry name" value="BioB"/>
    <property type="match status" value="1"/>
</dbReference>
<dbReference type="InterPro" id="IPR013785">
    <property type="entry name" value="Aldolase_TIM"/>
</dbReference>
<dbReference type="InterPro" id="IPR010722">
    <property type="entry name" value="BATS_dom"/>
</dbReference>
<dbReference type="InterPro" id="IPR002684">
    <property type="entry name" value="Biotin_synth/BioAB"/>
</dbReference>
<dbReference type="InterPro" id="IPR024177">
    <property type="entry name" value="Biotin_synthase"/>
</dbReference>
<dbReference type="InterPro" id="IPR006638">
    <property type="entry name" value="Elp3/MiaA/NifB-like_rSAM"/>
</dbReference>
<dbReference type="InterPro" id="IPR007197">
    <property type="entry name" value="rSAM"/>
</dbReference>
<dbReference type="NCBIfam" id="TIGR00433">
    <property type="entry name" value="bioB"/>
    <property type="match status" value="1"/>
</dbReference>
<dbReference type="PANTHER" id="PTHR22976">
    <property type="entry name" value="BIOTIN SYNTHASE"/>
    <property type="match status" value="1"/>
</dbReference>
<dbReference type="PANTHER" id="PTHR22976:SF2">
    <property type="entry name" value="BIOTIN SYNTHASE, MITOCHONDRIAL"/>
    <property type="match status" value="1"/>
</dbReference>
<dbReference type="Pfam" id="PF06968">
    <property type="entry name" value="BATS"/>
    <property type="match status" value="1"/>
</dbReference>
<dbReference type="Pfam" id="PF04055">
    <property type="entry name" value="Radical_SAM"/>
    <property type="match status" value="1"/>
</dbReference>
<dbReference type="PIRSF" id="PIRSF001619">
    <property type="entry name" value="Biotin_synth"/>
    <property type="match status" value="1"/>
</dbReference>
<dbReference type="SFLD" id="SFLDG01060">
    <property type="entry name" value="BATS_domain_containing"/>
    <property type="match status" value="1"/>
</dbReference>
<dbReference type="SFLD" id="SFLDF00272">
    <property type="entry name" value="biotin_synthase"/>
    <property type="match status" value="1"/>
</dbReference>
<dbReference type="SMART" id="SM00876">
    <property type="entry name" value="BATS"/>
    <property type="match status" value="1"/>
</dbReference>
<dbReference type="SMART" id="SM00729">
    <property type="entry name" value="Elp3"/>
    <property type="match status" value="1"/>
</dbReference>
<dbReference type="SUPFAM" id="SSF102114">
    <property type="entry name" value="Radical SAM enzymes"/>
    <property type="match status" value="1"/>
</dbReference>
<dbReference type="PROSITE" id="PS51918">
    <property type="entry name" value="RADICAL_SAM"/>
    <property type="match status" value="1"/>
</dbReference>
<proteinExistence type="inferred from homology"/>
<protein>
    <recommendedName>
        <fullName evidence="1">Biotin synthase</fullName>
        <ecNumber evidence="1">2.8.1.6</ecNumber>
    </recommendedName>
</protein>
<feature type="chain" id="PRO_0000381697" description="Biotin synthase">
    <location>
        <begin position="1"/>
        <end position="350"/>
    </location>
</feature>
<feature type="domain" description="Radical SAM core" evidence="2">
    <location>
        <begin position="38"/>
        <end position="256"/>
    </location>
</feature>
<feature type="binding site" evidence="1">
    <location>
        <position position="53"/>
    </location>
    <ligand>
        <name>[4Fe-4S] cluster</name>
        <dbReference type="ChEBI" id="CHEBI:49883"/>
        <note>4Fe-4S-S-AdoMet</note>
    </ligand>
</feature>
<feature type="binding site" evidence="1">
    <location>
        <position position="57"/>
    </location>
    <ligand>
        <name>[4Fe-4S] cluster</name>
        <dbReference type="ChEBI" id="CHEBI:49883"/>
        <note>4Fe-4S-S-AdoMet</note>
    </ligand>
</feature>
<feature type="binding site" evidence="1">
    <location>
        <position position="60"/>
    </location>
    <ligand>
        <name>[4Fe-4S] cluster</name>
        <dbReference type="ChEBI" id="CHEBI:49883"/>
        <note>4Fe-4S-S-AdoMet</note>
    </ligand>
</feature>
<feature type="binding site" evidence="1">
    <location>
        <position position="97"/>
    </location>
    <ligand>
        <name>[2Fe-2S] cluster</name>
        <dbReference type="ChEBI" id="CHEBI:190135"/>
    </ligand>
</feature>
<feature type="binding site" evidence="1">
    <location>
        <position position="128"/>
    </location>
    <ligand>
        <name>[2Fe-2S] cluster</name>
        <dbReference type="ChEBI" id="CHEBI:190135"/>
    </ligand>
</feature>
<feature type="binding site" evidence="1">
    <location>
        <position position="188"/>
    </location>
    <ligand>
        <name>[2Fe-2S] cluster</name>
        <dbReference type="ChEBI" id="CHEBI:190135"/>
    </ligand>
</feature>
<feature type="binding site" evidence="1">
    <location>
        <position position="260"/>
    </location>
    <ligand>
        <name>[2Fe-2S] cluster</name>
        <dbReference type="ChEBI" id="CHEBI:190135"/>
    </ligand>
</feature>
<evidence type="ECO:0000255" key="1">
    <source>
        <dbReference type="HAMAP-Rule" id="MF_01694"/>
    </source>
</evidence>
<evidence type="ECO:0000255" key="2">
    <source>
        <dbReference type="PROSITE-ProRule" id="PRU01266"/>
    </source>
</evidence>
<accession>B1WN69</accession>
<sequence>MEVRHNWTVAEVQTLMDKPFMDLIFEAQLVHRKYQQANHVQVSTLLSIKTGACPEDCKYCPQSAHYRTDVDRERLMEVESVLDAAKKAKNSGSTRFCMGAAWKNPKERDMPYLLDMIKGVKEMGLETCMTLGMITADQAGELSEAGLDYYNHNLDTSPEFYGNIITTRTYQDRLDTLSHVRDAGMKICSGGIIGMGESASDRAGLFVELANLPQHPESVPVNMLVKVKGTPLEDAEDVDPFDFIRLIAVARIMMPESAVRLSAGRESMNEQMQALCFMAGANSVFYGCKLLTTPNPDEDTDMQLFKKLGVNSEQVAQKPDQIQEHELLDRVAERVAARPNKDDLFYEASV</sequence>
<reference key="1">
    <citation type="journal article" date="2005" name="Proc. Natl. Acad. Sci. U.S.A.">
        <title>Complete genome sequence of Vibrio fischeri: a symbiotic bacterium with pathogenic congeners.</title>
        <authorList>
            <person name="Ruby E.G."/>
            <person name="Urbanowski M."/>
            <person name="Campbell J."/>
            <person name="Dunn A."/>
            <person name="Faini M."/>
            <person name="Gunsalus R."/>
            <person name="Lostroh P."/>
            <person name="Lupp C."/>
            <person name="McCann J."/>
            <person name="Millikan D."/>
            <person name="Schaefer A."/>
            <person name="Stabb E."/>
            <person name="Stevens A."/>
            <person name="Visick K."/>
            <person name="Whistler C."/>
            <person name="Greenberg E.P."/>
        </authorList>
    </citation>
    <scope>NUCLEOTIDE SEQUENCE [LARGE SCALE GENOMIC DNA]</scope>
    <source>
        <strain>ATCC 700601 / ES114</strain>
    </source>
</reference>
<comment type="function">
    <text evidence="1">Catalyzes the conversion of dethiobiotin (DTB) to biotin by the insertion of a sulfur atom into dethiobiotin via a radical-based mechanism.</text>
</comment>
<comment type="catalytic activity">
    <reaction evidence="1">
        <text>(4R,5S)-dethiobiotin + (sulfur carrier)-SH + 2 reduced [2Fe-2S]-[ferredoxin] + 2 S-adenosyl-L-methionine = (sulfur carrier)-H + biotin + 2 5'-deoxyadenosine + 2 L-methionine + 2 oxidized [2Fe-2S]-[ferredoxin]</text>
        <dbReference type="Rhea" id="RHEA:22060"/>
        <dbReference type="Rhea" id="RHEA-COMP:10000"/>
        <dbReference type="Rhea" id="RHEA-COMP:10001"/>
        <dbReference type="Rhea" id="RHEA-COMP:14737"/>
        <dbReference type="Rhea" id="RHEA-COMP:14739"/>
        <dbReference type="ChEBI" id="CHEBI:17319"/>
        <dbReference type="ChEBI" id="CHEBI:29917"/>
        <dbReference type="ChEBI" id="CHEBI:33737"/>
        <dbReference type="ChEBI" id="CHEBI:33738"/>
        <dbReference type="ChEBI" id="CHEBI:57586"/>
        <dbReference type="ChEBI" id="CHEBI:57844"/>
        <dbReference type="ChEBI" id="CHEBI:59789"/>
        <dbReference type="ChEBI" id="CHEBI:64428"/>
        <dbReference type="ChEBI" id="CHEBI:149473"/>
        <dbReference type="EC" id="2.8.1.6"/>
    </reaction>
</comment>
<comment type="cofactor">
    <cofactor evidence="1">
        <name>[4Fe-4S] cluster</name>
        <dbReference type="ChEBI" id="CHEBI:49883"/>
    </cofactor>
    <text evidence="1">Binds 1 [4Fe-4S] cluster. The cluster is coordinated with 3 cysteines and an exchangeable S-adenosyl-L-methionine.</text>
</comment>
<comment type="cofactor">
    <cofactor evidence="1">
        <name>[2Fe-2S] cluster</name>
        <dbReference type="ChEBI" id="CHEBI:190135"/>
    </cofactor>
    <text evidence="1">Binds 1 [2Fe-2S] cluster. The cluster is coordinated with 3 cysteines and 1 arginine.</text>
</comment>
<comment type="pathway">
    <text evidence="1">Cofactor biosynthesis; biotin biosynthesis; biotin from 7,8-diaminononanoate: step 2/2.</text>
</comment>
<comment type="subunit">
    <text evidence="1">Homodimer.</text>
</comment>
<comment type="similarity">
    <text evidence="1">Belongs to the radical SAM superfamily. Biotin synthase family.</text>
</comment>
<organism>
    <name type="scientific">Aliivibrio fischeri (strain ATCC 700601 / ES114)</name>
    <name type="common">Vibrio fischeri</name>
    <dbReference type="NCBI Taxonomy" id="312309"/>
    <lineage>
        <taxon>Bacteria</taxon>
        <taxon>Pseudomonadati</taxon>
        <taxon>Pseudomonadota</taxon>
        <taxon>Gammaproteobacteria</taxon>
        <taxon>Vibrionales</taxon>
        <taxon>Vibrionaceae</taxon>
        <taxon>Aliivibrio</taxon>
    </lineage>
</organism>
<keyword id="KW-0001">2Fe-2S</keyword>
<keyword id="KW-0004">4Fe-4S</keyword>
<keyword id="KW-0093">Biotin biosynthesis</keyword>
<keyword id="KW-0408">Iron</keyword>
<keyword id="KW-0411">Iron-sulfur</keyword>
<keyword id="KW-0479">Metal-binding</keyword>
<keyword id="KW-1185">Reference proteome</keyword>
<keyword id="KW-0949">S-adenosyl-L-methionine</keyword>
<keyword id="KW-0808">Transferase</keyword>
<name>BIOB_ALIF1</name>